<name>RS5_BACLD</name>
<protein>
    <recommendedName>
        <fullName evidence="1">Small ribosomal subunit protein uS5</fullName>
    </recommendedName>
    <alternativeName>
        <fullName evidence="2">30S ribosomal protein S5</fullName>
    </alternativeName>
</protein>
<keyword id="KW-1185">Reference proteome</keyword>
<keyword id="KW-0687">Ribonucleoprotein</keyword>
<keyword id="KW-0689">Ribosomal protein</keyword>
<keyword id="KW-0694">RNA-binding</keyword>
<keyword id="KW-0699">rRNA-binding</keyword>
<gene>
    <name evidence="1" type="primary">rpsE</name>
    <name type="ordered locus">BLi00150</name>
    <name type="ordered locus">BL01034</name>
</gene>
<proteinExistence type="inferred from homology"/>
<organism>
    <name type="scientific">Bacillus licheniformis (strain ATCC 14580 / DSM 13 / JCM 2505 / CCUG 7422 / NBRC 12200 / NCIMB 9375 / NCTC 10341 / NRRL NRS-1264 / Gibson 46)</name>
    <dbReference type="NCBI Taxonomy" id="279010"/>
    <lineage>
        <taxon>Bacteria</taxon>
        <taxon>Bacillati</taxon>
        <taxon>Bacillota</taxon>
        <taxon>Bacilli</taxon>
        <taxon>Bacillales</taxon>
        <taxon>Bacillaceae</taxon>
        <taxon>Bacillus</taxon>
    </lineage>
</organism>
<reference key="1">
    <citation type="journal article" date="2004" name="J. Mol. Microbiol. Biotechnol.">
        <title>The complete genome sequence of Bacillus licheniformis DSM13, an organism with great industrial potential.</title>
        <authorList>
            <person name="Veith B."/>
            <person name="Herzberg C."/>
            <person name="Steckel S."/>
            <person name="Feesche J."/>
            <person name="Maurer K.H."/>
            <person name="Ehrenreich P."/>
            <person name="Baeumer S."/>
            <person name="Henne A."/>
            <person name="Liesegang H."/>
            <person name="Merkl R."/>
            <person name="Ehrenreich A."/>
            <person name="Gottschalk G."/>
        </authorList>
    </citation>
    <scope>NUCLEOTIDE SEQUENCE [LARGE SCALE GENOMIC DNA]</scope>
    <source>
        <strain>ATCC 14580 / DSM 13 / JCM 2505 / CCUG 7422 / NBRC 12200 / NCIMB 9375 / NCTC 10341 / NRRL NRS-1264 / Gibson 46</strain>
    </source>
</reference>
<reference key="2">
    <citation type="journal article" date="2004" name="Genome Biol.">
        <title>Complete genome sequence of the industrial bacterium Bacillus licheniformis and comparisons with closely related Bacillus species.</title>
        <authorList>
            <person name="Rey M.W."/>
            <person name="Ramaiya P."/>
            <person name="Nelson B.A."/>
            <person name="Brody-Karpin S.D."/>
            <person name="Zaretsky E.J."/>
            <person name="Tang M."/>
            <person name="Lopez de Leon A."/>
            <person name="Xiang H."/>
            <person name="Gusti V."/>
            <person name="Clausen I.G."/>
            <person name="Olsen P.B."/>
            <person name="Rasmussen M.D."/>
            <person name="Andersen J.T."/>
            <person name="Joergensen P.L."/>
            <person name="Larsen T.S."/>
            <person name="Sorokin A."/>
            <person name="Bolotin A."/>
            <person name="Lapidus A."/>
            <person name="Galleron N."/>
            <person name="Ehrlich S.D."/>
            <person name="Berka R.M."/>
        </authorList>
    </citation>
    <scope>NUCLEOTIDE SEQUENCE [LARGE SCALE GENOMIC DNA]</scope>
    <source>
        <strain>ATCC 14580 / DSM 13 / JCM 2505 / CCUG 7422 / NBRC 12200 / NCIMB 9375 / NCTC 10341 / NRRL NRS-1264 / Gibson 46</strain>
    </source>
</reference>
<accession>Q65P90</accession>
<accession>Q62ZM9</accession>
<comment type="function">
    <text evidence="1">With S4 and S12 plays an important role in translational accuracy.</text>
</comment>
<comment type="function">
    <text evidence="1">Located at the back of the 30S subunit body where it stabilizes the conformation of the head with respect to the body.</text>
</comment>
<comment type="subunit">
    <text evidence="1">Part of the 30S ribosomal subunit. Contacts proteins S4 and S8.</text>
</comment>
<comment type="domain">
    <text>The N-terminal domain interacts with the head of the 30S subunit; the C-terminal domain interacts with the body and contacts protein S4. The interaction surface between S4 and S5 is involved in control of translational fidelity.</text>
</comment>
<comment type="similarity">
    <text evidence="1">Belongs to the universal ribosomal protein uS5 family.</text>
</comment>
<sequence>MNMRRIDPSKLELEERLVTVNRVAKVVKGGRRFRFAALVVVGDKNGHVGFGTGKAQEVPEAIRKAVEDAKKNLIEVPMVGTTIPHEIIGRFGAGNILLKPASEGTGVIAGGPVRAVLELAGVSDILSKSLGSNTPINMIRATVQGLSELKRAEDVAKLRGKSVEELLG</sequence>
<feature type="chain" id="PRO_0000131467" description="Small ribosomal subunit protein uS5">
    <location>
        <begin position="1"/>
        <end position="168"/>
    </location>
</feature>
<feature type="domain" description="S5 DRBM" evidence="1">
    <location>
        <begin position="13"/>
        <end position="76"/>
    </location>
</feature>
<dbReference type="EMBL" id="AE017333">
    <property type="protein sequence ID" value="AAU39124.1"/>
    <property type="molecule type" value="Genomic_DNA"/>
</dbReference>
<dbReference type="EMBL" id="CP000002">
    <property type="protein sequence ID" value="AAU21779.1"/>
    <property type="molecule type" value="Genomic_DNA"/>
</dbReference>
<dbReference type="SMR" id="Q65P90"/>
<dbReference type="STRING" id="279010.BL01034"/>
<dbReference type="KEGG" id="bld:BLi00150"/>
<dbReference type="KEGG" id="bli:BL01034"/>
<dbReference type="eggNOG" id="COG0098">
    <property type="taxonomic scope" value="Bacteria"/>
</dbReference>
<dbReference type="HOGENOM" id="CLU_065898_2_2_9"/>
<dbReference type="Proteomes" id="UP000000606">
    <property type="component" value="Chromosome"/>
</dbReference>
<dbReference type="GO" id="GO:0015935">
    <property type="term" value="C:small ribosomal subunit"/>
    <property type="evidence" value="ECO:0007669"/>
    <property type="project" value="InterPro"/>
</dbReference>
<dbReference type="GO" id="GO:0019843">
    <property type="term" value="F:rRNA binding"/>
    <property type="evidence" value="ECO:0007669"/>
    <property type="project" value="UniProtKB-UniRule"/>
</dbReference>
<dbReference type="GO" id="GO:0003735">
    <property type="term" value="F:structural constituent of ribosome"/>
    <property type="evidence" value="ECO:0007669"/>
    <property type="project" value="InterPro"/>
</dbReference>
<dbReference type="GO" id="GO:0006412">
    <property type="term" value="P:translation"/>
    <property type="evidence" value="ECO:0007669"/>
    <property type="project" value="UniProtKB-UniRule"/>
</dbReference>
<dbReference type="FunFam" id="3.30.160.20:FF:000001">
    <property type="entry name" value="30S ribosomal protein S5"/>
    <property type="match status" value="1"/>
</dbReference>
<dbReference type="FunFam" id="3.30.230.10:FF:000002">
    <property type="entry name" value="30S ribosomal protein S5"/>
    <property type="match status" value="1"/>
</dbReference>
<dbReference type="Gene3D" id="3.30.160.20">
    <property type="match status" value="1"/>
</dbReference>
<dbReference type="Gene3D" id="3.30.230.10">
    <property type="match status" value="1"/>
</dbReference>
<dbReference type="HAMAP" id="MF_01307_B">
    <property type="entry name" value="Ribosomal_uS5_B"/>
    <property type="match status" value="1"/>
</dbReference>
<dbReference type="InterPro" id="IPR020568">
    <property type="entry name" value="Ribosomal_Su5_D2-typ_SF"/>
</dbReference>
<dbReference type="InterPro" id="IPR000851">
    <property type="entry name" value="Ribosomal_uS5"/>
</dbReference>
<dbReference type="InterPro" id="IPR005712">
    <property type="entry name" value="Ribosomal_uS5_bac-type"/>
</dbReference>
<dbReference type="InterPro" id="IPR005324">
    <property type="entry name" value="Ribosomal_uS5_C"/>
</dbReference>
<dbReference type="InterPro" id="IPR013810">
    <property type="entry name" value="Ribosomal_uS5_N"/>
</dbReference>
<dbReference type="InterPro" id="IPR018192">
    <property type="entry name" value="Ribosomal_uS5_N_CS"/>
</dbReference>
<dbReference type="InterPro" id="IPR014721">
    <property type="entry name" value="Ribsml_uS5_D2-typ_fold_subgr"/>
</dbReference>
<dbReference type="NCBIfam" id="TIGR01021">
    <property type="entry name" value="rpsE_bact"/>
    <property type="match status" value="1"/>
</dbReference>
<dbReference type="PANTHER" id="PTHR48277">
    <property type="entry name" value="MITOCHONDRIAL RIBOSOMAL PROTEIN S5"/>
    <property type="match status" value="1"/>
</dbReference>
<dbReference type="PANTHER" id="PTHR48277:SF1">
    <property type="entry name" value="MITOCHONDRIAL RIBOSOMAL PROTEIN S5"/>
    <property type="match status" value="1"/>
</dbReference>
<dbReference type="Pfam" id="PF00333">
    <property type="entry name" value="Ribosomal_S5"/>
    <property type="match status" value="1"/>
</dbReference>
<dbReference type="Pfam" id="PF03719">
    <property type="entry name" value="Ribosomal_S5_C"/>
    <property type="match status" value="1"/>
</dbReference>
<dbReference type="SUPFAM" id="SSF54768">
    <property type="entry name" value="dsRNA-binding domain-like"/>
    <property type="match status" value="1"/>
</dbReference>
<dbReference type="SUPFAM" id="SSF54211">
    <property type="entry name" value="Ribosomal protein S5 domain 2-like"/>
    <property type="match status" value="1"/>
</dbReference>
<dbReference type="PROSITE" id="PS00585">
    <property type="entry name" value="RIBOSOMAL_S5"/>
    <property type="match status" value="1"/>
</dbReference>
<dbReference type="PROSITE" id="PS50881">
    <property type="entry name" value="S5_DSRBD"/>
    <property type="match status" value="1"/>
</dbReference>
<evidence type="ECO:0000255" key="1">
    <source>
        <dbReference type="HAMAP-Rule" id="MF_01307"/>
    </source>
</evidence>
<evidence type="ECO:0000305" key="2"/>